<name>VEAE_BPP22</name>
<feature type="chain" id="PRO_0000077771" description="Eae protein">
    <location>
        <begin position="1"/>
        <end position="165"/>
    </location>
</feature>
<protein>
    <recommendedName>
        <fullName>Eae protein</fullName>
    </recommendedName>
</protein>
<organism>
    <name type="scientific">Salmonella phage P22</name>
    <name type="common">Bacteriophage P22</name>
    <dbReference type="NCBI Taxonomy" id="10754"/>
    <lineage>
        <taxon>Viruses</taxon>
        <taxon>Duplodnaviria</taxon>
        <taxon>Heunggongvirae</taxon>
        <taxon>Uroviricota</taxon>
        <taxon>Caudoviricetes</taxon>
        <taxon>Lederbergvirus</taxon>
    </lineage>
</organism>
<keyword id="KW-1185">Reference proteome</keyword>
<accession>Q03547</accession>
<accession>Q7PCG6</accession>
<reference key="1">
    <citation type="journal article" date="1993" name="Mol. Microbiol.">
        <title>The int genes of bacteriophages P22 and lambda are regulated by different mechanisms.</title>
        <authorList>
            <person name="Wulff D.L."/>
            <person name="Ho Y.S."/>
            <person name="Powers S."/>
            <person name="Rosenberg M."/>
        </authorList>
    </citation>
    <scope>NUCLEOTIDE SEQUENCE</scope>
</reference>
<reference key="2">
    <citation type="journal article" date="2000" name="J. Bacteriol.">
        <title>Sequence of the genome of Salmonella bacteriophage P22.</title>
        <authorList>
            <person name="Vander Byl C.S."/>
            <person name="Kropinski A.M.B."/>
        </authorList>
    </citation>
    <scope>NUCLEOTIDE SEQUENCE [LARGE SCALE GENOMIC DNA]</scope>
</reference>
<reference key="3">
    <citation type="journal article" date="2003" name="J. Bacteriol.">
        <title>Corrected sequence of the bacteriophage P22 genome.</title>
        <authorList>
            <person name="Pedulla M.L."/>
            <person name="Ford M.E."/>
            <person name="Karthikeyan T."/>
            <person name="Houtz J.M."/>
            <person name="Hendrix R.W."/>
            <person name="Hatfull G.F."/>
            <person name="Poteete A.R."/>
            <person name="Gilcrease E.B."/>
            <person name="Winn-Stapley D.A."/>
            <person name="Casjens S.R."/>
        </authorList>
    </citation>
    <scope>NUCLEOTIDE SEQUENCE [LARGE SCALE GENOMIC DNA]</scope>
</reference>
<organismHost>
    <name type="scientific">Salmonella typhimurium</name>
    <dbReference type="NCBI Taxonomy" id="90371"/>
</organismHost>
<gene>
    <name type="primary">eae</name>
</gene>
<dbReference type="EMBL" id="L06296">
    <property type="protein sequence ID" value="AAC18887.1"/>
    <property type="molecule type" value="Unassigned_DNA"/>
</dbReference>
<dbReference type="EMBL" id="AF217253">
    <property type="protein sequence ID" value="AAF75010.1"/>
    <property type="molecule type" value="Genomic_DNA"/>
</dbReference>
<dbReference type="EMBL" id="BK000583">
    <property type="protein sequence ID" value="DAA01006.1"/>
    <property type="molecule type" value="Genomic_DNA"/>
</dbReference>
<dbReference type="PIR" id="S35287">
    <property type="entry name" value="S35287"/>
</dbReference>
<dbReference type="RefSeq" id="NP_059592.1">
    <property type="nucleotide sequence ID" value="NC_002371.2"/>
</dbReference>
<dbReference type="SMR" id="Q03547"/>
<dbReference type="GeneID" id="1262806"/>
<dbReference type="KEGG" id="vg:1262806"/>
<dbReference type="OrthoDB" id="11286at10239"/>
<dbReference type="Proteomes" id="UP000001795">
    <property type="component" value="Segment"/>
</dbReference>
<dbReference type="Proteomes" id="UP000007960">
    <property type="component" value="Segment"/>
</dbReference>
<proteinExistence type="predicted"/>
<sequence length="165" mass="18147">MQQVKIYTASPSDLSPPVQSESFCVDLVLASDYRELEAKCAALVVENGALKKSEVEFNDYCRHECEDVGDTWVDDFTETPATDAFLAEMRAQAHKEGAYFVANRMLAAWDAGFIDDTAKNAADIARMILTSTEFMADAPEGDFDRSFADGVIEDIAAQLRKGVQS</sequence>